<gene>
    <name type="primary">Ss18l1</name>
    <name type="synonym">Crest</name>
    <name type="synonym">Kiaa0693</name>
</gene>
<accession>Q8BW22</accession>
<accession>Q6A014</accession>
<accession>Q7TQF3</accession>
<accession>Q8BYQ7</accession>
<feature type="chain" id="PRO_0000391346" description="Calcium-responsive transactivator">
    <location>
        <begin position="1"/>
        <end position="402"/>
    </location>
</feature>
<feature type="region of interest" description="N-terminal auto-inhibitory domain; necessary for interaction with SMARCA4/BRG1" evidence="1">
    <location>
        <begin position="1"/>
        <end position="148"/>
    </location>
</feature>
<feature type="region of interest" description="Disordered" evidence="3">
    <location>
        <begin position="72"/>
        <end position="171"/>
    </location>
</feature>
<feature type="region of interest" description="Methionine-rich intra-molecular domain" evidence="1">
    <location>
        <begin position="149"/>
        <end position="238"/>
    </location>
</feature>
<feature type="region of interest" description="Disordered" evidence="3">
    <location>
        <begin position="221"/>
        <end position="402"/>
    </location>
</feature>
<feature type="region of interest" description="MFD domain" evidence="1">
    <location>
        <begin position="252"/>
        <end position="323"/>
    </location>
</feature>
<feature type="region of interest" description="Necessary for nuclear localization" evidence="1">
    <location>
        <begin position="340"/>
        <end position="402"/>
    </location>
</feature>
<feature type="region of interest" description="Necessary for interaction with CREBBP and for the recruitment of CREBBP to the nuclear bodies" evidence="1">
    <location>
        <begin position="393"/>
        <end position="402"/>
    </location>
</feature>
<feature type="short sequence motif" description="SH2-binding" evidence="2">
    <location>
        <begin position="50"/>
        <end position="53"/>
    </location>
</feature>
<feature type="short sequence motif" description="SH2-binding" evidence="2">
    <location>
        <begin position="359"/>
        <end position="362"/>
    </location>
</feature>
<feature type="short sequence motif" description="SH3-binding" evidence="2">
    <location>
        <begin position="377"/>
        <end position="385"/>
    </location>
</feature>
<feature type="short sequence motif" description="SH2-binding" evidence="2">
    <location>
        <begin position="397"/>
        <end position="400"/>
    </location>
</feature>
<feature type="compositionally biased region" description="Low complexity" evidence="3">
    <location>
        <begin position="85"/>
        <end position="106"/>
    </location>
</feature>
<feature type="compositionally biased region" description="Polar residues" evidence="3">
    <location>
        <begin position="128"/>
        <end position="149"/>
    </location>
</feature>
<feature type="compositionally biased region" description="Polar residues" evidence="3">
    <location>
        <begin position="161"/>
        <end position="171"/>
    </location>
</feature>
<feature type="compositionally biased region" description="Low complexity" evidence="3">
    <location>
        <begin position="233"/>
        <end position="251"/>
    </location>
</feature>
<feature type="compositionally biased region" description="Polar residues" evidence="3">
    <location>
        <begin position="261"/>
        <end position="277"/>
    </location>
</feature>
<feature type="compositionally biased region" description="Basic and acidic residues" evidence="3">
    <location>
        <begin position="296"/>
        <end position="305"/>
    </location>
</feature>
<feature type="compositionally biased region" description="Low complexity" evidence="3">
    <location>
        <begin position="311"/>
        <end position="375"/>
    </location>
</feature>
<feature type="compositionally biased region" description="Polar residues" evidence="3">
    <location>
        <begin position="376"/>
        <end position="388"/>
    </location>
</feature>
<feature type="compositionally biased region" description="Low complexity" evidence="3">
    <location>
        <begin position="390"/>
        <end position="402"/>
    </location>
</feature>
<feature type="sequence conflict" description="In Ref. 2; BAC30089." evidence="6" ref="2">
    <original>V</original>
    <variation>L</variation>
    <location>
        <position position="130"/>
    </location>
</feature>
<feature type="sequence conflict" description="In Ref. 4; AAH54730." evidence="6" ref="4">
    <original>S</original>
    <variation>I</variation>
    <location>
        <position position="159"/>
    </location>
</feature>
<reference key="1">
    <citation type="journal article" date="2004" name="DNA Res.">
        <title>Prediction of the coding sequences of mouse homologues of KIAA gene: IV. The complete nucleotide sequences of 500 mouse KIAA-homologous cDNAs identified by screening of terminal sequences of cDNA clones randomly sampled from size-fractionated libraries.</title>
        <authorList>
            <person name="Okazaki N."/>
            <person name="Kikuno R."/>
            <person name="Ohara R."/>
            <person name="Inamoto S."/>
            <person name="Koseki H."/>
            <person name="Hiraoka S."/>
            <person name="Saga Y."/>
            <person name="Seino S."/>
            <person name="Nishimura M."/>
            <person name="Kaisho T."/>
            <person name="Hoshino K."/>
            <person name="Kitamura H."/>
            <person name="Nagase T."/>
            <person name="Ohara O."/>
            <person name="Koga H."/>
        </authorList>
    </citation>
    <scope>NUCLEOTIDE SEQUENCE [LARGE SCALE MRNA]</scope>
    <source>
        <tissue>Fetal brain</tissue>
    </source>
</reference>
<reference key="2">
    <citation type="journal article" date="2005" name="Science">
        <title>The transcriptional landscape of the mammalian genome.</title>
        <authorList>
            <person name="Carninci P."/>
            <person name="Kasukawa T."/>
            <person name="Katayama S."/>
            <person name="Gough J."/>
            <person name="Frith M.C."/>
            <person name="Maeda N."/>
            <person name="Oyama R."/>
            <person name="Ravasi T."/>
            <person name="Lenhard B."/>
            <person name="Wells C."/>
            <person name="Kodzius R."/>
            <person name="Shimokawa K."/>
            <person name="Bajic V.B."/>
            <person name="Brenner S.E."/>
            <person name="Batalov S."/>
            <person name="Forrest A.R."/>
            <person name="Zavolan M."/>
            <person name="Davis M.J."/>
            <person name="Wilming L.G."/>
            <person name="Aidinis V."/>
            <person name="Allen J.E."/>
            <person name="Ambesi-Impiombato A."/>
            <person name="Apweiler R."/>
            <person name="Aturaliya R.N."/>
            <person name="Bailey T.L."/>
            <person name="Bansal M."/>
            <person name="Baxter L."/>
            <person name="Beisel K.W."/>
            <person name="Bersano T."/>
            <person name="Bono H."/>
            <person name="Chalk A.M."/>
            <person name="Chiu K.P."/>
            <person name="Choudhary V."/>
            <person name="Christoffels A."/>
            <person name="Clutterbuck D.R."/>
            <person name="Crowe M.L."/>
            <person name="Dalla E."/>
            <person name="Dalrymple B.P."/>
            <person name="de Bono B."/>
            <person name="Della Gatta G."/>
            <person name="di Bernardo D."/>
            <person name="Down T."/>
            <person name="Engstrom P."/>
            <person name="Fagiolini M."/>
            <person name="Faulkner G."/>
            <person name="Fletcher C.F."/>
            <person name="Fukushima T."/>
            <person name="Furuno M."/>
            <person name="Futaki S."/>
            <person name="Gariboldi M."/>
            <person name="Georgii-Hemming P."/>
            <person name="Gingeras T.R."/>
            <person name="Gojobori T."/>
            <person name="Green R.E."/>
            <person name="Gustincich S."/>
            <person name="Harbers M."/>
            <person name="Hayashi Y."/>
            <person name="Hensch T.K."/>
            <person name="Hirokawa N."/>
            <person name="Hill D."/>
            <person name="Huminiecki L."/>
            <person name="Iacono M."/>
            <person name="Ikeo K."/>
            <person name="Iwama A."/>
            <person name="Ishikawa T."/>
            <person name="Jakt M."/>
            <person name="Kanapin A."/>
            <person name="Katoh M."/>
            <person name="Kawasawa Y."/>
            <person name="Kelso J."/>
            <person name="Kitamura H."/>
            <person name="Kitano H."/>
            <person name="Kollias G."/>
            <person name="Krishnan S.P."/>
            <person name="Kruger A."/>
            <person name="Kummerfeld S.K."/>
            <person name="Kurochkin I.V."/>
            <person name="Lareau L.F."/>
            <person name="Lazarevic D."/>
            <person name="Lipovich L."/>
            <person name="Liu J."/>
            <person name="Liuni S."/>
            <person name="McWilliam S."/>
            <person name="Madan Babu M."/>
            <person name="Madera M."/>
            <person name="Marchionni L."/>
            <person name="Matsuda H."/>
            <person name="Matsuzawa S."/>
            <person name="Miki H."/>
            <person name="Mignone F."/>
            <person name="Miyake S."/>
            <person name="Morris K."/>
            <person name="Mottagui-Tabar S."/>
            <person name="Mulder N."/>
            <person name="Nakano N."/>
            <person name="Nakauchi H."/>
            <person name="Ng P."/>
            <person name="Nilsson R."/>
            <person name="Nishiguchi S."/>
            <person name="Nishikawa S."/>
            <person name="Nori F."/>
            <person name="Ohara O."/>
            <person name="Okazaki Y."/>
            <person name="Orlando V."/>
            <person name="Pang K.C."/>
            <person name="Pavan W.J."/>
            <person name="Pavesi G."/>
            <person name="Pesole G."/>
            <person name="Petrovsky N."/>
            <person name="Piazza S."/>
            <person name="Reed J."/>
            <person name="Reid J.F."/>
            <person name="Ring B.Z."/>
            <person name="Ringwald M."/>
            <person name="Rost B."/>
            <person name="Ruan Y."/>
            <person name="Salzberg S.L."/>
            <person name="Sandelin A."/>
            <person name="Schneider C."/>
            <person name="Schoenbach C."/>
            <person name="Sekiguchi K."/>
            <person name="Semple C.A."/>
            <person name="Seno S."/>
            <person name="Sessa L."/>
            <person name="Sheng Y."/>
            <person name="Shibata Y."/>
            <person name="Shimada H."/>
            <person name="Shimada K."/>
            <person name="Silva D."/>
            <person name="Sinclair B."/>
            <person name="Sperling S."/>
            <person name="Stupka E."/>
            <person name="Sugiura K."/>
            <person name="Sultana R."/>
            <person name="Takenaka Y."/>
            <person name="Taki K."/>
            <person name="Tammoja K."/>
            <person name="Tan S.L."/>
            <person name="Tang S."/>
            <person name="Taylor M.S."/>
            <person name="Tegner J."/>
            <person name="Teichmann S.A."/>
            <person name="Ueda H.R."/>
            <person name="van Nimwegen E."/>
            <person name="Verardo R."/>
            <person name="Wei C.L."/>
            <person name="Yagi K."/>
            <person name="Yamanishi H."/>
            <person name="Zabarovsky E."/>
            <person name="Zhu S."/>
            <person name="Zimmer A."/>
            <person name="Hide W."/>
            <person name="Bult C."/>
            <person name="Grimmond S.M."/>
            <person name="Teasdale R.D."/>
            <person name="Liu E.T."/>
            <person name="Brusic V."/>
            <person name="Quackenbush J."/>
            <person name="Wahlestedt C."/>
            <person name="Mattick J.S."/>
            <person name="Hume D.A."/>
            <person name="Kai C."/>
            <person name="Sasaki D."/>
            <person name="Tomaru Y."/>
            <person name="Fukuda S."/>
            <person name="Kanamori-Katayama M."/>
            <person name="Suzuki M."/>
            <person name="Aoki J."/>
            <person name="Arakawa T."/>
            <person name="Iida J."/>
            <person name="Imamura K."/>
            <person name="Itoh M."/>
            <person name="Kato T."/>
            <person name="Kawaji H."/>
            <person name="Kawagashira N."/>
            <person name="Kawashima T."/>
            <person name="Kojima M."/>
            <person name="Kondo S."/>
            <person name="Konno H."/>
            <person name="Nakano K."/>
            <person name="Ninomiya N."/>
            <person name="Nishio T."/>
            <person name="Okada M."/>
            <person name="Plessy C."/>
            <person name="Shibata K."/>
            <person name="Shiraki T."/>
            <person name="Suzuki S."/>
            <person name="Tagami M."/>
            <person name="Waki K."/>
            <person name="Watahiki A."/>
            <person name="Okamura-Oho Y."/>
            <person name="Suzuki H."/>
            <person name="Kawai J."/>
            <person name="Hayashizaki Y."/>
        </authorList>
    </citation>
    <scope>NUCLEOTIDE SEQUENCE [LARGE SCALE MRNA]</scope>
    <source>
        <strain>C57BL/6J</strain>
        <tissue>Hypothalamus</tissue>
        <tissue>Olfactory bulb</tissue>
    </source>
</reference>
<reference key="3">
    <citation type="journal article" date="2009" name="PLoS Biol.">
        <title>Lineage-specific biology revealed by a finished genome assembly of the mouse.</title>
        <authorList>
            <person name="Church D.M."/>
            <person name="Goodstadt L."/>
            <person name="Hillier L.W."/>
            <person name="Zody M.C."/>
            <person name="Goldstein S."/>
            <person name="She X."/>
            <person name="Bult C.J."/>
            <person name="Agarwala R."/>
            <person name="Cherry J.L."/>
            <person name="DiCuccio M."/>
            <person name="Hlavina W."/>
            <person name="Kapustin Y."/>
            <person name="Meric P."/>
            <person name="Maglott D."/>
            <person name="Birtle Z."/>
            <person name="Marques A.C."/>
            <person name="Graves T."/>
            <person name="Zhou S."/>
            <person name="Teague B."/>
            <person name="Potamousis K."/>
            <person name="Churas C."/>
            <person name="Place M."/>
            <person name="Herschleb J."/>
            <person name="Runnheim R."/>
            <person name="Forrest D."/>
            <person name="Amos-Landgraf J."/>
            <person name="Schwartz D.C."/>
            <person name="Cheng Z."/>
            <person name="Lindblad-Toh K."/>
            <person name="Eichler E.E."/>
            <person name="Ponting C.P."/>
        </authorList>
    </citation>
    <scope>NUCLEOTIDE SEQUENCE [LARGE SCALE GENOMIC DNA]</scope>
    <source>
        <strain>C57BL/6J</strain>
    </source>
</reference>
<reference key="4">
    <citation type="journal article" date="2004" name="Genome Res.">
        <title>The status, quality, and expansion of the NIH full-length cDNA project: the Mammalian Gene Collection (MGC).</title>
        <authorList>
            <consortium name="The MGC Project Team"/>
        </authorList>
    </citation>
    <scope>NUCLEOTIDE SEQUENCE [LARGE SCALE MRNA]</scope>
    <source>
        <strain>C57BL/6J</strain>
        <tissue>Brain</tissue>
    </source>
</reference>
<reference key="5">
    <citation type="journal article" date="2004" name="Science">
        <title>Dendrite development regulated by CREST, a calcium-regulated transcriptional activator.</title>
        <authorList>
            <person name="Aizawa H."/>
            <person name="Hu S.-C."/>
            <person name="Bobb K."/>
            <person name="Balakrishnan K."/>
            <person name="Ince G."/>
            <person name="Gurevich I."/>
            <person name="Cowan M."/>
            <person name="Ghosh A."/>
        </authorList>
    </citation>
    <scope>FUNCTION</scope>
    <scope>DISRUPTION PHENOTYPE</scope>
</reference>
<reference key="6">
    <citation type="journal article" date="2007" name="Neuron">
        <title>Regulation of dendritic development by neuron-specific chromatin remodeling complexes.</title>
        <authorList>
            <person name="Wu J.I."/>
            <person name="Lessard J."/>
            <person name="Olave I.A."/>
            <person name="Qiu Z."/>
            <person name="Ghosh A."/>
            <person name="Graef I.A."/>
            <person name="Crabtree G.R."/>
        </authorList>
    </citation>
    <scope>INTERACTION WITH THE NBAF COMPLEX</scope>
</reference>
<reference key="7">
    <citation type="journal article" date="2008" name="Neuron">
        <title>A calcium-dependent switch in a CREST-BRG1 complex regulates activity-dependent gene expression.</title>
        <authorList>
            <person name="Qiu Z."/>
            <person name="Ghosh A."/>
        </authorList>
    </citation>
    <scope>FUNCTION</scope>
</reference>
<sequence>MSVAFASARPRGKGEVTQQTIQKMLDENHHLIQCILDYQSKGKTAECTQYQQILHRNLVYLATIADSNQNMQSLLPAPPTQNMNLGPGALSQSGSSQGLHPQGSLSDTVSTGLPPASLMQGQIGNGPNHVSMQQTAQSTLPTTSMSLSGSGHGTGPGYSHSGPTSQSVPMQGQGAISNYVSRTNINMQSNPVSMMHQQAATSHYNSAQGGSQHYQGQAPIAMMGQGGQGGSMMGQRPMAPYRPSQQGSSQQYLGQEEYYSEQYSHSQGSAEPMSQQYYPDGHGDYAYQQSSYTEQSYDRSFEDPTQHYYEGGNSQYSQQQAGYQQGTAQQQTYSQQQYPNQQSYPGQQQGYGPAQGAPSQYSSYQQGQGQQYGSYRTSQTGPSAQQQRPYGYEQGQYGNYQQ</sequence>
<evidence type="ECO:0000250" key="1"/>
<evidence type="ECO:0000255" key="2"/>
<evidence type="ECO:0000256" key="3">
    <source>
        <dbReference type="SAM" id="MobiDB-lite"/>
    </source>
</evidence>
<evidence type="ECO:0000269" key="4">
    <source>
    </source>
</evidence>
<evidence type="ECO:0000269" key="5">
    <source>
    </source>
</evidence>
<evidence type="ECO:0000305" key="6"/>
<protein>
    <recommendedName>
        <fullName>Calcium-responsive transactivator</fullName>
    </recommendedName>
    <alternativeName>
        <fullName>SS18-like protein 1</fullName>
    </alternativeName>
</protein>
<proteinExistence type="evidence at protein level"/>
<organism>
    <name type="scientific">Mus musculus</name>
    <name type="common">Mouse</name>
    <dbReference type="NCBI Taxonomy" id="10090"/>
    <lineage>
        <taxon>Eukaryota</taxon>
        <taxon>Metazoa</taxon>
        <taxon>Chordata</taxon>
        <taxon>Craniata</taxon>
        <taxon>Vertebrata</taxon>
        <taxon>Euteleostomi</taxon>
        <taxon>Mammalia</taxon>
        <taxon>Eutheria</taxon>
        <taxon>Euarchontoglires</taxon>
        <taxon>Glires</taxon>
        <taxon>Rodentia</taxon>
        <taxon>Myomorpha</taxon>
        <taxon>Muroidea</taxon>
        <taxon>Muridae</taxon>
        <taxon>Murinae</taxon>
        <taxon>Mus</taxon>
        <taxon>Mus</taxon>
    </lineage>
</organism>
<dbReference type="EMBL" id="AK173004">
    <property type="protein sequence ID" value="BAD32282.1"/>
    <property type="molecule type" value="mRNA"/>
</dbReference>
<dbReference type="EMBL" id="AK038669">
    <property type="protein sequence ID" value="BAC30089.1"/>
    <property type="molecule type" value="mRNA"/>
</dbReference>
<dbReference type="EMBL" id="AK054560">
    <property type="protein sequence ID" value="BAC35824.1"/>
    <property type="molecule type" value="mRNA"/>
</dbReference>
<dbReference type="EMBL" id="AK133944">
    <property type="protein sequence ID" value="BAE21942.1"/>
    <property type="molecule type" value="mRNA"/>
</dbReference>
<dbReference type="EMBL" id="AL663067">
    <property type="status" value="NOT_ANNOTATED_CDS"/>
    <property type="molecule type" value="Genomic_DNA"/>
</dbReference>
<dbReference type="EMBL" id="BC053087">
    <property type="protein sequence ID" value="AAH53087.1"/>
    <property type="molecule type" value="mRNA"/>
</dbReference>
<dbReference type="EMBL" id="BC054730">
    <property type="protein sequence ID" value="AAH54730.1"/>
    <property type="molecule type" value="mRNA"/>
</dbReference>
<dbReference type="CCDS" id="CCDS17167.1"/>
<dbReference type="RefSeq" id="NP_848865.4">
    <property type="nucleotide sequence ID" value="NM_178750.5"/>
</dbReference>
<dbReference type="SMR" id="Q8BW22"/>
<dbReference type="BioGRID" id="234646">
    <property type="interactions" value="2"/>
</dbReference>
<dbReference type="CORUM" id="Q8BW22"/>
<dbReference type="FunCoup" id="Q8BW22">
    <property type="interactions" value="2424"/>
</dbReference>
<dbReference type="STRING" id="10090.ENSMUSP00000041288"/>
<dbReference type="GlyGen" id="Q8BW22">
    <property type="glycosylation" value="1 site, 1 O-linked glycan (1 site)"/>
</dbReference>
<dbReference type="iPTMnet" id="Q8BW22"/>
<dbReference type="PhosphoSitePlus" id="Q8BW22"/>
<dbReference type="PaxDb" id="10090-ENSMUSP00000041288"/>
<dbReference type="PeptideAtlas" id="Q8BW22"/>
<dbReference type="ProteomicsDB" id="284135"/>
<dbReference type="Pumba" id="Q8BW22"/>
<dbReference type="Antibodypedia" id="44341">
    <property type="antibodies" value="154 antibodies from 23 providers"/>
</dbReference>
<dbReference type="DNASU" id="269397"/>
<dbReference type="Ensembl" id="ENSMUST00000041126.9">
    <property type="protein sequence ID" value="ENSMUSP00000041288.9"/>
    <property type="gene ID" value="ENSMUSG00000039086.10"/>
</dbReference>
<dbReference type="GeneID" id="269397"/>
<dbReference type="KEGG" id="mmu:269397"/>
<dbReference type="UCSC" id="uc008oic.2">
    <property type="organism name" value="mouse"/>
</dbReference>
<dbReference type="AGR" id="MGI:2444061"/>
<dbReference type="CTD" id="26039"/>
<dbReference type="MGI" id="MGI:2444061">
    <property type="gene designation" value="Ss18l1"/>
</dbReference>
<dbReference type="VEuPathDB" id="HostDB:ENSMUSG00000039086"/>
<dbReference type="eggNOG" id="KOG3227">
    <property type="taxonomic scope" value="Eukaryota"/>
</dbReference>
<dbReference type="GeneTree" id="ENSGT00940000159853"/>
<dbReference type="HOGENOM" id="CLU_054580_1_0_1"/>
<dbReference type="InParanoid" id="Q8BW22"/>
<dbReference type="OMA" id="ASEPMNQ"/>
<dbReference type="OrthoDB" id="10265171at2759"/>
<dbReference type="PhylomeDB" id="Q8BW22"/>
<dbReference type="TreeFam" id="TF330999"/>
<dbReference type="BioGRID-ORCS" id="269397">
    <property type="hits" value="4 hits in 79 CRISPR screens"/>
</dbReference>
<dbReference type="PRO" id="PR:Q8BW22"/>
<dbReference type="Proteomes" id="UP000000589">
    <property type="component" value="Chromosome 2"/>
</dbReference>
<dbReference type="RNAct" id="Q8BW22">
    <property type="molecule type" value="protein"/>
</dbReference>
<dbReference type="Bgee" id="ENSMUSG00000039086">
    <property type="expression patterns" value="Expressed in CA1 field of hippocampus and 209 other cell types or tissues"/>
</dbReference>
<dbReference type="GO" id="GO:0000775">
    <property type="term" value="C:chromosome, centromeric region"/>
    <property type="evidence" value="ECO:0000250"/>
    <property type="project" value="MGI"/>
</dbReference>
<dbReference type="GO" id="GO:0000779">
    <property type="term" value="C:condensed chromosome, centromeric region"/>
    <property type="evidence" value="ECO:0000314"/>
    <property type="project" value="MGI"/>
</dbReference>
<dbReference type="GO" id="GO:0005829">
    <property type="term" value="C:cytosol"/>
    <property type="evidence" value="ECO:0007669"/>
    <property type="project" value="Ensembl"/>
</dbReference>
<dbReference type="GO" id="GO:0000776">
    <property type="term" value="C:kinetochore"/>
    <property type="evidence" value="ECO:0000266"/>
    <property type="project" value="MGI"/>
</dbReference>
<dbReference type="GO" id="GO:0071565">
    <property type="term" value="C:nBAF complex"/>
    <property type="evidence" value="ECO:0000314"/>
    <property type="project" value="MGI"/>
</dbReference>
<dbReference type="GO" id="GO:0005654">
    <property type="term" value="C:nucleoplasm"/>
    <property type="evidence" value="ECO:0000304"/>
    <property type="project" value="Reactome"/>
</dbReference>
<dbReference type="GO" id="GO:0005634">
    <property type="term" value="C:nucleus"/>
    <property type="evidence" value="ECO:0000250"/>
    <property type="project" value="UniProtKB"/>
</dbReference>
<dbReference type="GO" id="GO:0003677">
    <property type="term" value="F:DNA binding"/>
    <property type="evidence" value="ECO:0000266"/>
    <property type="project" value="MGI"/>
</dbReference>
<dbReference type="GO" id="GO:0003700">
    <property type="term" value="F:DNA-binding transcription factor activity"/>
    <property type="evidence" value="ECO:0000266"/>
    <property type="project" value="MGI"/>
</dbReference>
<dbReference type="GO" id="GO:0006325">
    <property type="term" value="P:chromatin organization"/>
    <property type="evidence" value="ECO:0007669"/>
    <property type="project" value="UniProtKB-KW"/>
</dbReference>
<dbReference type="GO" id="GO:0016358">
    <property type="term" value="P:dendrite development"/>
    <property type="evidence" value="ECO:0000315"/>
    <property type="project" value="MGI"/>
</dbReference>
<dbReference type="GO" id="GO:0050775">
    <property type="term" value="P:positive regulation of dendrite morphogenesis"/>
    <property type="evidence" value="ECO:0000315"/>
    <property type="project" value="MGI"/>
</dbReference>
<dbReference type="GO" id="GO:0045893">
    <property type="term" value="P:positive regulation of DNA-templated transcription"/>
    <property type="evidence" value="ECO:0000250"/>
    <property type="project" value="UniProtKB"/>
</dbReference>
<dbReference type="GO" id="GO:0006355">
    <property type="term" value="P:regulation of DNA-templated transcription"/>
    <property type="evidence" value="ECO:0000266"/>
    <property type="project" value="MGI"/>
</dbReference>
<dbReference type="InterPro" id="IPR007726">
    <property type="entry name" value="SS18_N"/>
</dbReference>
<dbReference type="PANTHER" id="PTHR23107:SF21">
    <property type="entry name" value="CALCIUM-RESPONSIVE TRANSACTIVATOR"/>
    <property type="match status" value="1"/>
</dbReference>
<dbReference type="PANTHER" id="PTHR23107">
    <property type="entry name" value="SYNOVIAL SARCOMA ASSOCIATED SS18 PROTEIN"/>
    <property type="match status" value="1"/>
</dbReference>
<dbReference type="Pfam" id="PF05030">
    <property type="entry name" value="SSXT"/>
    <property type="match status" value="1"/>
</dbReference>
<keyword id="KW-0010">Activator</keyword>
<keyword id="KW-0106">Calcium</keyword>
<keyword id="KW-0137">Centromere</keyword>
<keyword id="KW-0156">Chromatin regulator</keyword>
<keyword id="KW-0158">Chromosome</keyword>
<keyword id="KW-0995">Kinetochore</keyword>
<keyword id="KW-0539">Nucleus</keyword>
<keyword id="KW-1185">Reference proteome</keyword>
<keyword id="KW-0677">Repeat</keyword>
<keyword id="KW-0804">Transcription</keyword>
<keyword id="KW-0805">Transcription regulation</keyword>
<comment type="function">
    <text evidence="4 5">Transcriptional activator which is required for calcium-dependent dendritic growth and branching in cortical neurons. Recruits CREB-binding protein (CREBBP) to nuclear bodies. Component of the CREST-BRG1 complex, a multiprotein complex that regulates promoter activation by orchestrating a calcium-dependent release of a repressor complex and a recruitment of an activator complex. In resting neurons, transcription of the c-FOS promoter is inhibited by BRG1-dependent recruitment of a phospho-RB1-HDAC1 repressor complex. Upon calcium influx, RB1 is dephosphorylated by calcineurin, which leads to release of the repressor complex. At the same time, there is increased recruitment of CREBBP to the promoter by a CREST-dependent mechanism, which leads to transcriptional activation. The CREST-BRG1 complex also binds to the NR2B promoter, and activity-dependent induction of NR2B expression involves a release of HDAC1 and recruitment of CREBBP.</text>
</comment>
<comment type="subunit">
    <text evidence="1">Homodimer. Dimerization may be necessary for its function in neuronal dendritic development. Interacts (via C-terminus) with CREBBP (via N-terminus), EP300 and SMARCA4/BRG1. Interacts with the nBAF complex. Association with CREBBP facilitates transcription while the association with SMARCA4/BRG1 suppresses CREST-mediated transcription in resting neurons (By similarity).</text>
</comment>
<comment type="subcellular location">
    <subcellularLocation>
        <location evidence="1">Nucleus</location>
    </subcellularLocation>
    <subcellularLocation>
        <location evidence="1">Chromosome</location>
        <location evidence="1">Centromere</location>
        <location evidence="1">Kinetochore</location>
    </subcellularLocation>
    <text evidence="1">Localizes to nuclear bodies. Colocalizes with SGO1 at kinetochore (By similarity).</text>
</comment>
<comment type="domain">
    <text evidence="1">The MFD (multi-functional domain) domain is involved in transcription transactivation, nuclear body targeting and dimerization.</text>
</comment>
<comment type="disruption phenotype">
    <text evidence="4">Mice are smaller than littermates and show coordination defects. There is increased mortality in beginning at about P14, and about 80% die by P28. Less than 20% survive to adulthood, and they are infertile.</text>
</comment>
<comment type="similarity">
    <text evidence="6">Belongs to the SS18 family.</text>
</comment>
<name>CREST_MOUSE</name>